<accession>Q1JPZ7</accession>
<accession>Q801W4</accession>
<reference key="1">
    <citation type="journal article" date="2013" name="Nature">
        <title>The zebrafish reference genome sequence and its relationship to the human genome.</title>
        <authorList>
            <person name="Howe K."/>
            <person name="Clark M.D."/>
            <person name="Torroja C.F."/>
            <person name="Torrance J."/>
            <person name="Berthelot C."/>
            <person name="Muffato M."/>
            <person name="Collins J.E."/>
            <person name="Humphray S."/>
            <person name="McLaren K."/>
            <person name="Matthews L."/>
            <person name="McLaren S."/>
            <person name="Sealy I."/>
            <person name="Caccamo M."/>
            <person name="Churcher C."/>
            <person name="Scott C."/>
            <person name="Barrett J.C."/>
            <person name="Koch R."/>
            <person name="Rauch G.J."/>
            <person name="White S."/>
            <person name="Chow W."/>
            <person name="Kilian B."/>
            <person name="Quintais L.T."/>
            <person name="Guerra-Assuncao J.A."/>
            <person name="Zhou Y."/>
            <person name="Gu Y."/>
            <person name="Yen J."/>
            <person name="Vogel J.H."/>
            <person name="Eyre T."/>
            <person name="Redmond S."/>
            <person name="Banerjee R."/>
            <person name="Chi J."/>
            <person name="Fu B."/>
            <person name="Langley E."/>
            <person name="Maguire S.F."/>
            <person name="Laird G.K."/>
            <person name="Lloyd D."/>
            <person name="Kenyon E."/>
            <person name="Donaldson S."/>
            <person name="Sehra H."/>
            <person name="Almeida-King J."/>
            <person name="Loveland J."/>
            <person name="Trevanion S."/>
            <person name="Jones M."/>
            <person name="Quail M."/>
            <person name="Willey D."/>
            <person name="Hunt A."/>
            <person name="Burton J."/>
            <person name="Sims S."/>
            <person name="McLay K."/>
            <person name="Plumb B."/>
            <person name="Davis J."/>
            <person name="Clee C."/>
            <person name="Oliver K."/>
            <person name="Clark R."/>
            <person name="Riddle C."/>
            <person name="Elliot D."/>
            <person name="Threadgold G."/>
            <person name="Harden G."/>
            <person name="Ware D."/>
            <person name="Begum S."/>
            <person name="Mortimore B."/>
            <person name="Kerry G."/>
            <person name="Heath P."/>
            <person name="Phillimore B."/>
            <person name="Tracey A."/>
            <person name="Corby N."/>
            <person name="Dunn M."/>
            <person name="Johnson C."/>
            <person name="Wood J."/>
            <person name="Clark S."/>
            <person name="Pelan S."/>
            <person name="Griffiths G."/>
            <person name="Smith M."/>
            <person name="Glithero R."/>
            <person name="Howden P."/>
            <person name="Barker N."/>
            <person name="Lloyd C."/>
            <person name="Stevens C."/>
            <person name="Harley J."/>
            <person name="Holt K."/>
            <person name="Panagiotidis G."/>
            <person name="Lovell J."/>
            <person name="Beasley H."/>
            <person name="Henderson C."/>
            <person name="Gordon D."/>
            <person name="Auger K."/>
            <person name="Wright D."/>
            <person name="Collins J."/>
            <person name="Raisen C."/>
            <person name="Dyer L."/>
            <person name="Leung K."/>
            <person name="Robertson L."/>
            <person name="Ambridge K."/>
            <person name="Leongamornlert D."/>
            <person name="McGuire S."/>
            <person name="Gilderthorp R."/>
            <person name="Griffiths C."/>
            <person name="Manthravadi D."/>
            <person name="Nichol S."/>
            <person name="Barker G."/>
            <person name="Whitehead S."/>
            <person name="Kay M."/>
            <person name="Brown J."/>
            <person name="Murnane C."/>
            <person name="Gray E."/>
            <person name="Humphries M."/>
            <person name="Sycamore N."/>
            <person name="Barker D."/>
            <person name="Saunders D."/>
            <person name="Wallis J."/>
            <person name="Babbage A."/>
            <person name="Hammond S."/>
            <person name="Mashreghi-Mohammadi M."/>
            <person name="Barr L."/>
            <person name="Martin S."/>
            <person name="Wray P."/>
            <person name="Ellington A."/>
            <person name="Matthews N."/>
            <person name="Ellwood M."/>
            <person name="Woodmansey R."/>
            <person name="Clark G."/>
            <person name="Cooper J."/>
            <person name="Tromans A."/>
            <person name="Grafham D."/>
            <person name="Skuce C."/>
            <person name="Pandian R."/>
            <person name="Andrews R."/>
            <person name="Harrison E."/>
            <person name="Kimberley A."/>
            <person name="Garnett J."/>
            <person name="Fosker N."/>
            <person name="Hall R."/>
            <person name="Garner P."/>
            <person name="Kelly D."/>
            <person name="Bird C."/>
            <person name="Palmer S."/>
            <person name="Gehring I."/>
            <person name="Berger A."/>
            <person name="Dooley C.M."/>
            <person name="Ersan-Urun Z."/>
            <person name="Eser C."/>
            <person name="Geiger H."/>
            <person name="Geisler M."/>
            <person name="Karotki L."/>
            <person name="Kirn A."/>
            <person name="Konantz J."/>
            <person name="Konantz M."/>
            <person name="Oberlander M."/>
            <person name="Rudolph-Geiger S."/>
            <person name="Teucke M."/>
            <person name="Lanz C."/>
            <person name="Raddatz G."/>
            <person name="Osoegawa K."/>
            <person name="Zhu B."/>
            <person name="Rapp A."/>
            <person name="Widaa S."/>
            <person name="Langford C."/>
            <person name="Yang F."/>
            <person name="Schuster S.C."/>
            <person name="Carter N.P."/>
            <person name="Harrow J."/>
            <person name="Ning Z."/>
            <person name="Herrero J."/>
            <person name="Searle S.M."/>
            <person name="Enright A."/>
            <person name="Geisler R."/>
            <person name="Plasterk R.H."/>
            <person name="Lee C."/>
            <person name="Westerfield M."/>
            <person name="de Jong P.J."/>
            <person name="Zon L.I."/>
            <person name="Postlethwait J.H."/>
            <person name="Nusslein-Volhard C."/>
            <person name="Hubbard T.J."/>
            <person name="Roest Crollius H."/>
            <person name="Rogers J."/>
            <person name="Stemple D.L."/>
        </authorList>
    </citation>
    <scope>NUCLEOTIDE SEQUENCE [LARGE SCALE GENOMIC DNA]</scope>
    <source>
        <strain>Tuebingen</strain>
    </source>
</reference>
<reference key="2">
    <citation type="submission" date="2003-01" db="EMBL/GenBank/DDBJ databases">
        <authorList>
            <consortium name="NIH - Zebrafish Gene Collection (ZGC) project"/>
        </authorList>
    </citation>
    <scope>NUCLEOTIDE SEQUENCE [LARGE SCALE MRNA]</scope>
    <source>
        <strain>AB</strain>
        <tissue>Skin</tissue>
    </source>
</reference>
<name>PRP39_DANRE</name>
<feature type="chain" id="PRO_0000259650" description="Pre-mRNA-processing factor 39">
    <location>
        <begin position="1"/>
        <end position="752"/>
    </location>
</feature>
<feature type="repeat" description="HAT 1">
    <location>
        <begin position="180"/>
        <end position="212"/>
    </location>
</feature>
<feature type="repeat" description="HAT 2">
    <location>
        <begin position="214"/>
        <end position="246"/>
    </location>
</feature>
<feature type="repeat" description="HAT 3">
    <location>
        <begin position="254"/>
        <end position="289"/>
    </location>
</feature>
<feature type="repeat" description="HAT 4">
    <location>
        <begin position="408"/>
        <end position="440"/>
    </location>
</feature>
<feature type="repeat" description="HAT 5">
    <location>
        <begin position="442"/>
        <end position="474"/>
    </location>
</feature>
<feature type="repeat" description="HAT 6">
    <location>
        <begin position="700"/>
        <end position="731"/>
    </location>
</feature>
<feature type="region of interest" description="Disordered" evidence="2">
    <location>
        <begin position="1"/>
        <end position="148"/>
    </location>
</feature>
<feature type="region of interest" description="Disordered" evidence="2">
    <location>
        <begin position="347"/>
        <end position="374"/>
    </location>
</feature>
<feature type="region of interest" description="Disordered" evidence="2">
    <location>
        <begin position="678"/>
        <end position="703"/>
    </location>
</feature>
<feature type="compositionally biased region" description="Polar residues" evidence="2">
    <location>
        <begin position="28"/>
        <end position="42"/>
    </location>
</feature>
<feature type="compositionally biased region" description="Low complexity" evidence="2">
    <location>
        <begin position="43"/>
        <end position="56"/>
    </location>
</feature>
<feature type="compositionally biased region" description="Low complexity" evidence="2">
    <location>
        <begin position="76"/>
        <end position="94"/>
    </location>
</feature>
<feature type="compositionally biased region" description="Low complexity" evidence="2">
    <location>
        <begin position="133"/>
        <end position="148"/>
    </location>
</feature>
<feature type="compositionally biased region" description="Acidic residues" evidence="2">
    <location>
        <begin position="352"/>
        <end position="361"/>
    </location>
</feature>
<feature type="compositionally biased region" description="Basic and acidic residues" evidence="2">
    <location>
        <begin position="678"/>
        <end position="699"/>
    </location>
</feature>
<feature type="sequence conflict" description="In Ref. 2; AAI16541." evidence="3" ref="2">
    <original>G</original>
    <variation>R</variation>
    <location>
        <position position="10"/>
    </location>
</feature>
<feature type="sequence conflict" description="In Ref. 2; AAI16541." evidence="3" ref="2">
    <original>Q</original>
    <variation>R</variation>
    <location>
        <position position="217"/>
    </location>
</feature>
<feature type="sequence conflict" description="In Ref. 2; AAI16541." evidence="3" ref="2">
    <original>A</original>
    <variation>T</variation>
    <location>
        <position position="355"/>
    </location>
</feature>
<evidence type="ECO:0000250" key="1"/>
<evidence type="ECO:0000256" key="2">
    <source>
        <dbReference type="SAM" id="MobiDB-lite"/>
    </source>
</evidence>
<evidence type="ECO:0000305" key="3"/>
<sequence>MEDSGESMTGMLDSKSPESGDSPAMEGTTGTDDVTGLSTSDLTTEQPPESQEQTQPVSDMEFSVEHLKTAVQNIDQSASPAEPAAENSEQPPESNGQQEDQSEQPDDVKEAGQGDSESPSNMELEDAPKEPAEPAAEADPAAPQEPELPTEYERLSKVVEDNPEDFNGWVYLLQYVEQENHLLGSRKAFDAFFLHYPYCYGYWKKYADIERKHGYIQMADEVYRRGLQAIPLSVDLWLHYITFLRENQDTSDGEAESRIRASYEHAVLACGTDFRSDRLWEAYIAWETEQGKLANVTAIYDRLLCIPTQLYSQHFQKFKDHVQSNNPKHFLSEEEFVSLRVELANANKPSGDEDAETEAPGEELPPGTEDLPDPAKRVTEIENMRHKVIETRQEMFNHNEHEVSKRWAFEEGIKRPYFHVKALEKTQLNNWREYLDFELENGTPERVVVLFERCLIACALYEEFWIKYAKYLESYSTEAVRHIYKKACTVHLPKKPNVHLLWAAFEEQQGSIDEARSILKAVEVSVPGLAMVRLRRVSLERRHGNMEEAEALLQDAITNGRNSSESSFYSVKLARQLVKVQKSIGRAKKVLLEAVEKDETNPKLYLNLLELEYSGDVQQNEAEIIACFDRALSSSMALESRITFSQRKVDFLEDFGSDINTLMAAYEQHQRLLAEQESFKRKAENGSEEPDAKRQRTDDQSVASGQMMDMQANHAGYNYNNWYQYNSWGSQNSWGQYGQYGQYNQYYPPPPT</sequence>
<proteinExistence type="evidence at transcript level"/>
<comment type="function">
    <text evidence="1">Involved in pre-mRNA splicing.</text>
</comment>
<comment type="subcellular location">
    <subcellularLocation>
        <location evidence="1">Nucleus</location>
    </subcellularLocation>
</comment>
<comment type="similarity">
    <text evidence="3">Belongs to the PRP39 family.</text>
</comment>
<gene>
    <name type="primary">prpf39</name>
    <name type="ORF">si:dz261o22.3</name>
</gene>
<dbReference type="EMBL" id="AL591492">
    <property type="protein sequence ID" value="CAD87784.1"/>
    <property type="molecule type" value="Genomic_DNA"/>
</dbReference>
<dbReference type="EMBL" id="BC116540">
    <property type="protein sequence ID" value="AAI16541.1"/>
    <property type="molecule type" value="mRNA"/>
</dbReference>
<dbReference type="RefSeq" id="NP_001004520.1">
    <property type="nucleotide sequence ID" value="NM_001004520.1"/>
</dbReference>
<dbReference type="SMR" id="Q1JPZ7"/>
<dbReference type="FunCoup" id="Q1JPZ7">
    <property type="interactions" value="1654"/>
</dbReference>
<dbReference type="STRING" id="7955.ENSDARP00000139799"/>
<dbReference type="PaxDb" id="7955-ENSDARP00000061671"/>
<dbReference type="Ensembl" id="ENSDART00000170482">
    <property type="protein sequence ID" value="ENSDARP00000139799"/>
    <property type="gene ID" value="ENSDARG00000100209"/>
</dbReference>
<dbReference type="GeneID" id="368864"/>
<dbReference type="KEGG" id="dre:368864"/>
<dbReference type="AGR" id="ZFIN:ZDB-GENE-030616-420"/>
<dbReference type="CTD" id="55015"/>
<dbReference type="ZFIN" id="ZDB-GENE-030616-420">
    <property type="gene designation" value="prpf39"/>
</dbReference>
<dbReference type="eggNOG" id="KOG1258">
    <property type="taxonomic scope" value="Eukaryota"/>
</dbReference>
<dbReference type="HOGENOM" id="CLU_007434_2_0_1"/>
<dbReference type="InParanoid" id="Q1JPZ7"/>
<dbReference type="OMA" id="IISWANL"/>
<dbReference type="OrthoDB" id="10265668at2759"/>
<dbReference type="PhylomeDB" id="Q1JPZ7"/>
<dbReference type="TreeFam" id="TF314746"/>
<dbReference type="PRO" id="PR:Q1JPZ7"/>
<dbReference type="Proteomes" id="UP000000437">
    <property type="component" value="Chromosome 20"/>
</dbReference>
<dbReference type="Bgee" id="ENSDARG00000100209">
    <property type="expression patterns" value="Expressed in somite and 27 other cell types or tissues"/>
</dbReference>
<dbReference type="GO" id="GO:0000243">
    <property type="term" value="C:commitment complex"/>
    <property type="evidence" value="ECO:0000318"/>
    <property type="project" value="GO_Central"/>
</dbReference>
<dbReference type="GO" id="GO:0005685">
    <property type="term" value="C:U1 snRNP"/>
    <property type="evidence" value="ECO:0000318"/>
    <property type="project" value="GO_Central"/>
</dbReference>
<dbReference type="GO" id="GO:0071004">
    <property type="term" value="C:U2-type prespliceosome"/>
    <property type="evidence" value="ECO:0000318"/>
    <property type="project" value="GO_Central"/>
</dbReference>
<dbReference type="GO" id="GO:0000395">
    <property type="term" value="P:mRNA 5'-splice site recognition"/>
    <property type="evidence" value="ECO:0000318"/>
    <property type="project" value="GO_Central"/>
</dbReference>
<dbReference type="FunFam" id="1.25.40.10:FF:000063">
    <property type="entry name" value="Pre-mRNA processing factor 39"/>
    <property type="match status" value="1"/>
</dbReference>
<dbReference type="FunFam" id="1.25.40.10:FF:000091">
    <property type="entry name" value="Pre-mRNA-processing factor 39"/>
    <property type="match status" value="1"/>
</dbReference>
<dbReference type="Gene3D" id="1.25.40.10">
    <property type="entry name" value="Tetratricopeptide repeat domain"/>
    <property type="match status" value="2"/>
</dbReference>
<dbReference type="InterPro" id="IPR003107">
    <property type="entry name" value="HAT"/>
</dbReference>
<dbReference type="InterPro" id="IPR011990">
    <property type="entry name" value="TPR-like_helical_dom_sf"/>
</dbReference>
<dbReference type="PANTHER" id="PTHR17204">
    <property type="entry name" value="PRE-MRNA PROCESSING PROTEIN PRP39-RELATED"/>
    <property type="match status" value="1"/>
</dbReference>
<dbReference type="PANTHER" id="PTHR17204:SF21">
    <property type="entry name" value="PRE-MRNA-PROCESSING FACTOR 39"/>
    <property type="match status" value="1"/>
</dbReference>
<dbReference type="Pfam" id="PF23241">
    <property type="entry name" value="HAT_PRP39_C"/>
    <property type="match status" value="1"/>
</dbReference>
<dbReference type="Pfam" id="PF23240">
    <property type="entry name" value="HAT_PRP39_N"/>
    <property type="match status" value="1"/>
</dbReference>
<dbReference type="SMART" id="SM00386">
    <property type="entry name" value="HAT"/>
    <property type="match status" value="7"/>
</dbReference>
<dbReference type="SUPFAM" id="SSF48452">
    <property type="entry name" value="TPR-like"/>
    <property type="match status" value="2"/>
</dbReference>
<organism>
    <name type="scientific">Danio rerio</name>
    <name type="common">Zebrafish</name>
    <name type="synonym">Brachydanio rerio</name>
    <dbReference type="NCBI Taxonomy" id="7955"/>
    <lineage>
        <taxon>Eukaryota</taxon>
        <taxon>Metazoa</taxon>
        <taxon>Chordata</taxon>
        <taxon>Craniata</taxon>
        <taxon>Vertebrata</taxon>
        <taxon>Euteleostomi</taxon>
        <taxon>Actinopterygii</taxon>
        <taxon>Neopterygii</taxon>
        <taxon>Teleostei</taxon>
        <taxon>Ostariophysi</taxon>
        <taxon>Cypriniformes</taxon>
        <taxon>Danionidae</taxon>
        <taxon>Danioninae</taxon>
        <taxon>Danio</taxon>
    </lineage>
</organism>
<keyword id="KW-0507">mRNA processing</keyword>
<keyword id="KW-0508">mRNA splicing</keyword>
<keyword id="KW-0539">Nucleus</keyword>
<keyword id="KW-1185">Reference proteome</keyword>
<keyword id="KW-0677">Repeat</keyword>
<protein>
    <recommendedName>
        <fullName>Pre-mRNA-processing factor 39</fullName>
    </recommendedName>
    <alternativeName>
        <fullName>PRP39 homolog</fullName>
    </alternativeName>
</protein>